<sequence length="92" mass="10737">SPQIQVYTRHPPENGKPNILNCYVSQFHPPHIEIEMLKNGKKIPEIEMSDLSFSKDWSFYILAHTEFTPTDSDTYSCRVTHVSMKEPKTVNW</sequence>
<evidence type="ECO:0000250" key="1"/>
<evidence type="ECO:0000255" key="2">
    <source>
        <dbReference type="PROSITE-ProRule" id="PRU00114"/>
    </source>
</evidence>
<evidence type="ECO:0000305" key="3"/>
<gene>
    <name type="primary">B2m</name>
</gene>
<accession>P55077</accession>
<keyword id="KW-1015">Disulfide bond</keyword>
<keyword id="KW-0391">Immunity</keyword>
<keyword id="KW-0393">Immunoglobulin domain</keyword>
<keyword id="KW-0490">MHC I</keyword>
<keyword id="KW-0964">Secreted</keyword>
<name>B2MG_MUSCR</name>
<dbReference type="EMBL" id="L04989">
    <property type="protein sequence ID" value="AAA39364.1"/>
    <property type="molecule type" value="Genomic_DNA"/>
</dbReference>
<dbReference type="SMR" id="P55077"/>
<dbReference type="Proteomes" id="UP000515126">
    <property type="component" value="Unplaced"/>
</dbReference>
<dbReference type="GO" id="GO:0005576">
    <property type="term" value="C:extracellular region"/>
    <property type="evidence" value="ECO:0007669"/>
    <property type="project" value="UniProtKB-SubCell"/>
</dbReference>
<dbReference type="GO" id="GO:0042612">
    <property type="term" value="C:MHC class I protein complex"/>
    <property type="evidence" value="ECO:0007669"/>
    <property type="project" value="UniProtKB-KW"/>
</dbReference>
<dbReference type="GO" id="GO:0002474">
    <property type="term" value="P:antigen processing and presentation of peptide antigen via MHC class I"/>
    <property type="evidence" value="ECO:0007669"/>
    <property type="project" value="UniProtKB-KW"/>
</dbReference>
<dbReference type="GO" id="GO:0006955">
    <property type="term" value="P:immune response"/>
    <property type="evidence" value="ECO:0007669"/>
    <property type="project" value="InterPro"/>
</dbReference>
<dbReference type="CDD" id="cd05770">
    <property type="entry name" value="IgC1_beta2m"/>
    <property type="match status" value="1"/>
</dbReference>
<dbReference type="FunFam" id="2.60.40.10:FF:001005">
    <property type="entry name" value="Beta-2-microglobulin"/>
    <property type="match status" value="1"/>
</dbReference>
<dbReference type="Gene3D" id="2.60.40.10">
    <property type="entry name" value="Immunoglobulins"/>
    <property type="match status" value="1"/>
</dbReference>
<dbReference type="InterPro" id="IPR015707">
    <property type="entry name" value="B2Microglobulin"/>
</dbReference>
<dbReference type="InterPro" id="IPR007110">
    <property type="entry name" value="Ig-like_dom"/>
</dbReference>
<dbReference type="InterPro" id="IPR036179">
    <property type="entry name" value="Ig-like_dom_sf"/>
</dbReference>
<dbReference type="InterPro" id="IPR013783">
    <property type="entry name" value="Ig-like_fold"/>
</dbReference>
<dbReference type="InterPro" id="IPR003006">
    <property type="entry name" value="Ig/MHC_CS"/>
</dbReference>
<dbReference type="InterPro" id="IPR003597">
    <property type="entry name" value="Ig_C1-set"/>
</dbReference>
<dbReference type="InterPro" id="IPR050160">
    <property type="entry name" value="MHC/Immunoglobulin"/>
</dbReference>
<dbReference type="PANTHER" id="PTHR19944:SF62">
    <property type="entry name" value="BETA-2-MICROGLOBULIN"/>
    <property type="match status" value="1"/>
</dbReference>
<dbReference type="PANTHER" id="PTHR19944">
    <property type="entry name" value="MHC CLASS II-RELATED"/>
    <property type="match status" value="1"/>
</dbReference>
<dbReference type="Pfam" id="PF07654">
    <property type="entry name" value="C1-set"/>
    <property type="match status" value="1"/>
</dbReference>
<dbReference type="SMART" id="SM00407">
    <property type="entry name" value="IGc1"/>
    <property type="match status" value="1"/>
</dbReference>
<dbReference type="SUPFAM" id="SSF48726">
    <property type="entry name" value="Immunoglobulin"/>
    <property type="match status" value="1"/>
</dbReference>
<dbReference type="PROSITE" id="PS50835">
    <property type="entry name" value="IG_LIKE"/>
    <property type="match status" value="1"/>
</dbReference>
<dbReference type="PROSITE" id="PS00290">
    <property type="entry name" value="IG_MHC"/>
    <property type="match status" value="1"/>
</dbReference>
<organism>
    <name type="scientific">Mus caroli</name>
    <name type="common">Ryukyu mouse</name>
    <name type="synonym">Ricefield mouse</name>
    <dbReference type="NCBI Taxonomy" id="10089"/>
    <lineage>
        <taxon>Eukaryota</taxon>
        <taxon>Metazoa</taxon>
        <taxon>Chordata</taxon>
        <taxon>Craniata</taxon>
        <taxon>Vertebrata</taxon>
        <taxon>Euteleostomi</taxon>
        <taxon>Mammalia</taxon>
        <taxon>Eutheria</taxon>
        <taxon>Euarchontoglires</taxon>
        <taxon>Glires</taxon>
        <taxon>Rodentia</taxon>
        <taxon>Myomorpha</taxon>
        <taxon>Muroidea</taxon>
        <taxon>Muridae</taxon>
        <taxon>Murinae</taxon>
        <taxon>Mus</taxon>
        <taxon>Mus</taxon>
    </lineage>
</organism>
<comment type="function">
    <text evidence="1">Component of the class I major histocompatibility complex (MHC). Involved in the presentation of peptide antigens to the immune system (By similarity).</text>
</comment>
<comment type="subunit">
    <text evidence="1">Heterodimer of an alpha chain and a beta chain. Beta-2-microglobulin is the beta-chain of major histocompatibility complex class I molecules (By similarity).</text>
</comment>
<comment type="subcellular location">
    <subcellularLocation>
        <location evidence="1">Secreted</location>
    </subcellularLocation>
</comment>
<comment type="similarity">
    <text evidence="3">Belongs to the beta-2-microglobulin family.</text>
</comment>
<protein>
    <recommendedName>
        <fullName>Beta-2-microglobulin</fullName>
    </recommendedName>
</protein>
<proteinExistence type="inferred from homology"/>
<feature type="chain" id="PRO_0000080734" description="Beta-2-microglobulin">
    <location>
        <begin position="1" status="less than"/>
        <end position="92" status="greater than"/>
    </location>
</feature>
<feature type="domain" description="Ig-like C1-type">
    <location>
        <begin position="2"/>
        <end position="91"/>
    </location>
</feature>
<feature type="disulfide bond" evidence="2">
    <location>
        <begin position="22"/>
        <end position="77"/>
    </location>
</feature>
<feature type="non-terminal residue">
    <location>
        <position position="1"/>
    </location>
</feature>
<feature type="non-terminal residue">
    <location>
        <position position="92"/>
    </location>
</feature>
<reference key="1">
    <citation type="submission" date="1992-11" db="EMBL/GenBank/DDBJ databases">
        <authorList>
            <person name="Hermel E."/>
            <person name="She J.-X."/>
            <person name="Fischer-Lindahl K."/>
        </authorList>
    </citation>
    <scope>NUCLEOTIDE SEQUENCE [GENOMIC DNA]</scope>
    <source>
        <strain>KAR</strain>
    </source>
</reference>